<comment type="function">
    <text evidence="1">One of the primary rRNA binding proteins, it binds directly to 16S rRNA where it nucleates assembly of the head domain of the 30S subunit. Is located at the subunit interface close to the decoding center, probably blocks exit of the E-site tRNA.</text>
</comment>
<comment type="subunit">
    <text evidence="1">Part of the 30S ribosomal subunit. Contacts proteins S9 and S11.</text>
</comment>
<comment type="similarity">
    <text evidence="1">Belongs to the universal ribosomal protein uS7 family.</text>
</comment>
<sequence length="156" mass="17981">MSRRHAAEKREVLPDAKFGDRVLTKFMNNLMIDGKKSAAEKIVYNAFDRVESKLKRSPLEVFHECLDNIKPSVEVRSRRVGGATYQVPVEVRPERREALAIRWLINASRARNENTMEERLAGELVDAVNSRGSAVKKREDTHKMAEANKAFSHYRW</sequence>
<evidence type="ECO:0000255" key="1">
    <source>
        <dbReference type="HAMAP-Rule" id="MF_00480"/>
    </source>
</evidence>
<evidence type="ECO:0000305" key="2"/>
<name>RS7_DINSH</name>
<keyword id="KW-1185">Reference proteome</keyword>
<keyword id="KW-0687">Ribonucleoprotein</keyword>
<keyword id="KW-0689">Ribosomal protein</keyword>
<keyword id="KW-0694">RNA-binding</keyword>
<keyword id="KW-0699">rRNA-binding</keyword>
<keyword id="KW-0820">tRNA-binding</keyword>
<dbReference type="EMBL" id="CP000830">
    <property type="protein sequence ID" value="ABV92021.1"/>
    <property type="molecule type" value="Genomic_DNA"/>
</dbReference>
<dbReference type="RefSeq" id="WP_012176953.1">
    <property type="nucleotide sequence ID" value="NC_009952.1"/>
</dbReference>
<dbReference type="SMR" id="A8LM44"/>
<dbReference type="STRING" id="398580.Dshi_0272"/>
<dbReference type="KEGG" id="dsh:Dshi_0272"/>
<dbReference type="eggNOG" id="COG0049">
    <property type="taxonomic scope" value="Bacteria"/>
</dbReference>
<dbReference type="HOGENOM" id="CLU_072226_1_1_5"/>
<dbReference type="OrthoDB" id="9807653at2"/>
<dbReference type="Proteomes" id="UP000006833">
    <property type="component" value="Chromosome"/>
</dbReference>
<dbReference type="GO" id="GO:0015935">
    <property type="term" value="C:small ribosomal subunit"/>
    <property type="evidence" value="ECO:0007669"/>
    <property type="project" value="InterPro"/>
</dbReference>
<dbReference type="GO" id="GO:0019843">
    <property type="term" value="F:rRNA binding"/>
    <property type="evidence" value="ECO:0007669"/>
    <property type="project" value="UniProtKB-UniRule"/>
</dbReference>
<dbReference type="GO" id="GO:0003735">
    <property type="term" value="F:structural constituent of ribosome"/>
    <property type="evidence" value="ECO:0007669"/>
    <property type="project" value="InterPro"/>
</dbReference>
<dbReference type="GO" id="GO:0000049">
    <property type="term" value="F:tRNA binding"/>
    <property type="evidence" value="ECO:0007669"/>
    <property type="project" value="UniProtKB-UniRule"/>
</dbReference>
<dbReference type="GO" id="GO:0006412">
    <property type="term" value="P:translation"/>
    <property type="evidence" value="ECO:0007669"/>
    <property type="project" value="UniProtKB-UniRule"/>
</dbReference>
<dbReference type="CDD" id="cd14869">
    <property type="entry name" value="uS7_Bacteria"/>
    <property type="match status" value="1"/>
</dbReference>
<dbReference type="FunFam" id="1.10.455.10:FF:000001">
    <property type="entry name" value="30S ribosomal protein S7"/>
    <property type="match status" value="1"/>
</dbReference>
<dbReference type="Gene3D" id="1.10.455.10">
    <property type="entry name" value="Ribosomal protein S7 domain"/>
    <property type="match status" value="1"/>
</dbReference>
<dbReference type="HAMAP" id="MF_00480_B">
    <property type="entry name" value="Ribosomal_uS7_B"/>
    <property type="match status" value="1"/>
</dbReference>
<dbReference type="InterPro" id="IPR000235">
    <property type="entry name" value="Ribosomal_uS7"/>
</dbReference>
<dbReference type="InterPro" id="IPR005717">
    <property type="entry name" value="Ribosomal_uS7_bac/org-type"/>
</dbReference>
<dbReference type="InterPro" id="IPR020606">
    <property type="entry name" value="Ribosomal_uS7_CS"/>
</dbReference>
<dbReference type="InterPro" id="IPR023798">
    <property type="entry name" value="Ribosomal_uS7_dom"/>
</dbReference>
<dbReference type="InterPro" id="IPR036823">
    <property type="entry name" value="Ribosomal_uS7_dom_sf"/>
</dbReference>
<dbReference type="NCBIfam" id="TIGR01029">
    <property type="entry name" value="rpsG_bact"/>
    <property type="match status" value="1"/>
</dbReference>
<dbReference type="PANTHER" id="PTHR11205">
    <property type="entry name" value="RIBOSOMAL PROTEIN S7"/>
    <property type="match status" value="1"/>
</dbReference>
<dbReference type="Pfam" id="PF00177">
    <property type="entry name" value="Ribosomal_S7"/>
    <property type="match status" value="1"/>
</dbReference>
<dbReference type="PIRSF" id="PIRSF002122">
    <property type="entry name" value="RPS7p_RPS7a_RPS5e_RPS7o"/>
    <property type="match status" value="1"/>
</dbReference>
<dbReference type="SUPFAM" id="SSF47973">
    <property type="entry name" value="Ribosomal protein S7"/>
    <property type="match status" value="1"/>
</dbReference>
<dbReference type="PROSITE" id="PS00052">
    <property type="entry name" value="RIBOSOMAL_S7"/>
    <property type="match status" value="1"/>
</dbReference>
<accession>A8LM44</accession>
<protein>
    <recommendedName>
        <fullName evidence="1">Small ribosomal subunit protein uS7</fullName>
    </recommendedName>
    <alternativeName>
        <fullName evidence="2">30S ribosomal protein S7</fullName>
    </alternativeName>
</protein>
<organism>
    <name type="scientific">Dinoroseobacter shibae (strain DSM 16493 / NCIMB 14021 / DFL 12)</name>
    <dbReference type="NCBI Taxonomy" id="398580"/>
    <lineage>
        <taxon>Bacteria</taxon>
        <taxon>Pseudomonadati</taxon>
        <taxon>Pseudomonadota</taxon>
        <taxon>Alphaproteobacteria</taxon>
        <taxon>Rhodobacterales</taxon>
        <taxon>Roseobacteraceae</taxon>
        <taxon>Dinoroseobacter</taxon>
    </lineage>
</organism>
<gene>
    <name evidence="1" type="primary">rpsG</name>
    <name type="ordered locus">Dshi_0272</name>
</gene>
<feature type="chain" id="PRO_1000081280" description="Small ribosomal subunit protein uS7">
    <location>
        <begin position="1"/>
        <end position="156"/>
    </location>
</feature>
<reference key="1">
    <citation type="journal article" date="2010" name="ISME J.">
        <title>The complete genome sequence of the algal symbiont Dinoroseobacter shibae: a hitchhiker's guide to life in the sea.</title>
        <authorList>
            <person name="Wagner-Dobler I."/>
            <person name="Ballhausen B."/>
            <person name="Berger M."/>
            <person name="Brinkhoff T."/>
            <person name="Buchholz I."/>
            <person name="Bunk B."/>
            <person name="Cypionka H."/>
            <person name="Daniel R."/>
            <person name="Drepper T."/>
            <person name="Gerdts G."/>
            <person name="Hahnke S."/>
            <person name="Han C."/>
            <person name="Jahn D."/>
            <person name="Kalhoefer D."/>
            <person name="Kiss H."/>
            <person name="Klenk H.P."/>
            <person name="Kyrpides N."/>
            <person name="Liebl W."/>
            <person name="Liesegang H."/>
            <person name="Meincke L."/>
            <person name="Pati A."/>
            <person name="Petersen J."/>
            <person name="Piekarski T."/>
            <person name="Pommerenke C."/>
            <person name="Pradella S."/>
            <person name="Pukall R."/>
            <person name="Rabus R."/>
            <person name="Stackebrandt E."/>
            <person name="Thole S."/>
            <person name="Thompson L."/>
            <person name="Tielen P."/>
            <person name="Tomasch J."/>
            <person name="von Jan M."/>
            <person name="Wanphrut N."/>
            <person name="Wichels A."/>
            <person name="Zech H."/>
            <person name="Simon M."/>
        </authorList>
    </citation>
    <scope>NUCLEOTIDE SEQUENCE [LARGE SCALE GENOMIC DNA]</scope>
    <source>
        <strain>DSM 16493 / NCIMB 14021 / DFL 12</strain>
    </source>
</reference>
<proteinExistence type="inferred from homology"/>